<comment type="function">
    <text evidence="1">Forms part of the ribosomal stalk which helps the ribosome interact with GTP-bound translation factors.</text>
</comment>
<comment type="subunit">
    <text evidence="1">Part of the ribosomal stalk of the 50S ribosomal subunit. Interacts with L10 and the large rRNA to form the base of the stalk. L10 forms an elongated spine to which L12 dimers bind in a sequential fashion forming a multimeric L10(L12)X complex.</text>
</comment>
<comment type="PTM">
    <text evidence="1">One or more lysine residues are methylated.</text>
</comment>
<comment type="similarity">
    <text evidence="1">Belongs to the universal ribosomal protein uL11 family.</text>
</comment>
<name>RL11_PHOV8</name>
<protein>
    <recommendedName>
        <fullName evidence="1">Large ribosomal subunit protein uL11</fullName>
    </recommendedName>
    <alternativeName>
        <fullName evidence="2">50S ribosomal protein L11</fullName>
    </alternativeName>
</protein>
<accession>A6KYK7</accession>
<organism>
    <name type="scientific">Phocaeicola vulgatus (strain ATCC 8482 / DSM 1447 / JCM 5826 / CCUG 4940 / NBRC 14291 / NCTC 11154)</name>
    <name type="common">Bacteroides vulgatus</name>
    <dbReference type="NCBI Taxonomy" id="435590"/>
    <lineage>
        <taxon>Bacteria</taxon>
        <taxon>Pseudomonadati</taxon>
        <taxon>Bacteroidota</taxon>
        <taxon>Bacteroidia</taxon>
        <taxon>Bacteroidales</taxon>
        <taxon>Bacteroidaceae</taxon>
        <taxon>Phocaeicola</taxon>
    </lineage>
</organism>
<reference key="1">
    <citation type="journal article" date="2007" name="PLoS Biol.">
        <title>Evolution of symbiotic bacteria in the distal human intestine.</title>
        <authorList>
            <person name="Xu J."/>
            <person name="Mahowald M.A."/>
            <person name="Ley R.E."/>
            <person name="Lozupone C.A."/>
            <person name="Hamady M."/>
            <person name="Martens E.C."/>
            <person name="Henrissat B."/>
            <person name="Coutinho P.M."/>
            <person name="Minx P."/>
            <person name="Latreille P."/>
            <person name="Cordum H."/>
            <person name="Van Brunt A."/>
            <person name="Kim K."/>
            <person name="Fulton R.S."/>
            <person name="Fulton L.A."/>
            <person name="Clifton S.W."/>
            <person name="Wilson R.K."/>
            <person name="Knight R.D."/>
            <person name="Gordon J.I."/>
        </authorList>
    </citation>
    <scope>NUCLEOTIDE SEQUENCE [LARGE SCALE GENOMIC DNA]</scope>
    <source>
        <strain>ATCC 8482 / DSM 1447 / JCM 5826 / CCUG 4940 / NBRC 14291 / NCTC 11154</strain>
    </source>
</reference>
<proteinExistence type="inferred from homology"/>
<dbReference type="EMBL" id="CP000139">
    <property type="protein sequence ID" value="ABR38521.1"/>
    <property type="molecule type" value="Genomic_DNA"/>
</dbReference>
<dbReference type="RefSeq" id="WP_005844826.1">
    <property type="nucleotide sequence ID" value="NZ_JANSWM010000035.1"/>
</dbReference>
<dbReference type="SMR" id="A6KYK7"/>
<dbReference type="STRING" id="435590.BVU_0817"/>
<dbReference type="PaxDb" id="435590-BVU_0817"/>
<dbReference type="GeneID" id="93449034"/>
<dbReference type="KEGG" id="bvu:BVU_0817"/>
<dbReference type="eggNOG" id="COG0080">
    <property type="taxonomic scope" value="Bacteria"/>
</dbReference>
<dbReference type="HOGENOM" id="CLU_074237_2_1_10"/>
<dbReference type="BioCyc" id="BVUL435590:G1G59-859-MONOMER"/>
<dbReference type="Proteomes" id="UP000002861">
    <property type="component" value="Chromosome"/>
</dbReference>
<dbReference type="GO" id="GO:0022625">
    <property type="term" value="C:cytosolic large ribosomal subunit"/>
    <property type="evidence" value="ECO:0007669"/>
    <property type="project" value="TreeGrafter"/>
</dbReference>
<dbReference type="GO" id="GO:0070180">
    <property type="term" value="F:large ribosomal subunit rRNA binding"/>
    <property type="evidence" value="ECO:0007669"/>
    <property type="project" value="UniProtKB-UniRule"/>
</dbReference>
<dbReference type="GO" id="GO:0003735">
    <property type="term" value="F:structural constituent of ribosome"/>
    <property type="evidence" value="ECO:0007669"/>
    <property type="project" value="InterPro"/>
</dbReference>
<dbReference type="GO" id="GO:0006412">
    <property type="term" value="P:translation"/>
    <property type="evidence" value="ECO:0007669"/>
    <property type="project" value="UniProtKB-UniRule"/>
</dbReference>
<dbReference type="CDD" id="cd00349">
    <property type="entry name" value="Ribosomal_L11"/>
    <property type="match status" value="1"/>
</dbReference>
<dbReference type="FunFam" id="1.10.10.250:FF:000001">
    <property type="entry name" value="50S ribosomal protein L11"/>
    <property type="match status" value="1"/>
</dbReference>
<dbReference type="FunFam" id="3.30.1550.10:FF:000001">
    <property type="entry name" value="50S ribosomal protein L11"/>
    <property type="match status" value="1"/>
</dbReference>
<dbReference type="Gene3D" id="1.10.10.250">
    <property type="entry name" value="Ribosomal protein L11, C-terminal domain"/>
    <property type="match status" value="1"/>
</dbReference>
<dbReference type="Gene3D" id="3.30.1550.10">
    <property type="entry name" value="Ribosomal protein L11/L12, N-terminal domain"/>
    <property type="match status" value="1"/>
</dbReference>
<dbReference type="HAMAP" id="MF_00736">
    <property type="entry name" value="Ribosomal_uL11"/>
    <property type="match status" value="1"/>
</dbReference>
<dbReference type="InterPro" id="IPR000911">
    <property type="entry name" value="Ribosomal_uL11"/>
</dbReference>
<dbReference type="InterPro" id="IPR006519">
    <property type="entry name" value="Ribosomal_uL11_bac-typ"/>
</dbReference>
<dbReference type="InterPro" id="IPR020783">
    <property type="entry name" value="Ribosomal_uL11_C"/>
</dbReference>
<dbReference type="InterPro" id="IPR036769">
    <property type="entry name" value="Ribosomal_uL11_C_sf"/>
</dbReference>
<dbReference type="InterPro" id="IPR020784">
    <property type="entry name" value="Ribosomal_uL11_N"/>
</dbReference>
<dbReference type="InterPro" id="IPR036796">
    <property type="entry name" value="Ribosomal_uL11_N_sf"/>
</dbReference>
<dbReference type="NCBIfam" id="TIGR01632">
    <property type="entry name" value="L11_bact"/>
    <property type="match status" value="1"/>
</dbReference>
<dbReference type="PANTHER" id="PTHR11661">
    <property type="entry name" value="60S RIBOSOMAL PROTEIN L12"/>
    <property type="match status" value="1"/>
</dbReference>
<dbReference type="PANTHER" id="PTHR11661:SF1">
    <property type="entry name" value="LARGE RIBOSOMAL SUBUNIT PROTEIN UL11M"/>
    <property type="match status" value="1"/>
</dbReference>
<dbReference type="Pfam" id="PF00298">
    <property type="entry name" value="Ribosomal_L11"/>
    <property type="match status" value="1"/>
</dbReference>
<dbReference type="Pfam" id="PF03946">
    <property type="entry name" value="Ribosomal_L11_N"/>
    <property type="match status" value="1"/>
</dbReference>
<dbReference type="SMART" id="SM00649">
    <property type="entry name" value="RL11"/>
    <property type="match status" value="1"/>
</dbReference>
<dbReference type="SUPFAM" id="SSF54747">
    <property type="entry name" value="Ribosomal L11/L12e N-terminal domain"/>
    <property type="match status" value="1"/>
</dbReference>
<dbReference type="SUPFAM" id="SSF46906">
    <property type="entry name" value="Ribosomal protein L11, C-terminal domain"/>
    <property type="match status" value="1"/>
</dbReference>
<gene>
    <name evidence="1" type="primary">rplK</name>
    <name type="ordered locus">BVU_0817</name>
</gene>
<evidence type="ECO:0000255" key="1">
    <source>
        <dbReference type="HAMAP-Rule" id="MF_00736"/>
    </source>
</evidence>
<evidence type="ECO:0000305" key="2"/>
<sequence length="147" mass="15797">MAKEVAGLIKLQIKGGAANPSPPVGPALGSKGINIMEFCKQFNARTQDKAGKILPVIITYYADKSFDFVIKTPPVAIQLLELAKIKSGSAEPNRKKVAEITWEQVRTIAQDKMVDLNCFTIESAMTMVAGTARSMGIAVKGEFPGNN</sequence>
<feature type="chain" id="PRO_1000046142" description="Large ribosomal subunit protein uL11">
    <location>
        <begin position="1"/>
        <end position="147"/>
    </location>
</feature>
<keyword id="KW-0488">Methylation</keyword>
<keyword id="KW-0687">Ribonucleoprotein</keyword>
<keyword id="KW-0689">Ribosomal protein</keyword>
<keyword id="KW-0694">RNA-binding</keyword>
<keyword id="KW-0699">rRNA-binding</keyword>